<protein>
    <recommendedName>
        <fullName evidence="2">tRNA (guanine-N(7)-)-methyltransferase</fullName>
        <ecNumber evidence="2">2.1.1.33</ecNumber>
    </recommendedName>
    <alternativeName>
        <fullName evidence="2">tRNA (guanine(46)-N(7))-methyltransferase</fullName>
    </alternativeName>
    <alternativeName>
        <fullName evidence="2">tRNA(m7G46)-methyltransferase</fullName>
    </alternativeName>
</protein>
<accession>Q3BQ14</accession>
<evidence type="ECO:0000250" key="1"/>
<evidence type="ECO:0000255" key="2">
    <source>
        <dbReference type="HAMAP-Rule" id="MF_01057"/>
    </source>
</evidence>
<dbReference type="EC" id="2.1.1.33" evidence="2"/>
<dbReference type="EMBL" id="AM039952">
    <property type="protein sequence ID" value="CAJ25149.1"/>
    <property type="molecule type" value="Genomic_DNA"/>
</dbReference>
<dbReference type="SMR" id="Q3BQ14"/>
<dbReference type="KEGG" id="xcv:XCV3418"/>
<dbReference type="eggNOG" id="COG0220">
    <property type="taxonomic scope" value="Bacteria"/>
</dbReference>
<dbReference type="HOGENOM" id="CLU_050910_0_1_6"/>
<dbReference type="UniPathway" id="UPA00989"/>
<dbReference type="Proteomes" id="UP000007069">
    <property type="component" value="Chromosome"/>
</dbReference>
<dbReference type="GO" id="GO:0043527">
    <property type="term" value="C:tRNA methyltransferase complex"/>
    <property type="evidence" value="ECO:0007669"/>
    <property type="project" value="TreeGrafter"/>
</dbReference>
<dbReference type="GO" id="GO:0008176">
    <property type="term" value="F:tRNA (guanine(46)-N7)-methyltransferase activity"/>
    <property type="evidence" value="ECO:0007669"/>
    <property type="project" value="UniProtKB-UniRule"/>
</dbReference>
<dbReference type="CDD" id="cd02440">
    <property type="entry name" value="AdoMet_MTases"/>
    <property type="match status" value="1"/>
</dbReference>
<dbReference type="FunFam" id="3.40.50.150:FF:000035">
    <property type="entry name" value="tRNA (guanine-N(7)-)-methyltransferase"/>
    <property type="match status" value="1"/>
</dbReference>
<dbReference type="Gene3D" id="3.40.50.150">
    <property type="entry name" value="Vaccinia Virus protein VP39"/>
    <property type="match status" value="1"/>
</dbReference>
<dbReference type="HAMAP" id="MF_01057">
    <property type="entry name" value="tRNA_methyltr_TrmB"/>
    <property type="match status" value="1"/>
</dbReference>
<dbReference type="InterPro" id="IPR029063">
    <property type="entry name" value="SAM-dependent_MTases_sf"/>
</dbReference>
<dbReference type="InterPro" id="IPR003358">
    <property type="entry name" value="tRNA_(Gua-N-7)_MeTrfase_Trmb"/>
</dbReference>
<dbReference type="InterPro" id="IPR055361">
    <property type="entry name" value="tRNA_methyltr_TrmB_bact"/>
</dbReference>
<dbReference type="NCBIfam" id="TIGR00091">
    <property type="entry name" value="tRNA (guanosine(46)-N7)-methyltransferase TrmB"/>
    <property type="match status" value="1"/>
</dbReference>
<dbReference type="PANTHER" id="PTHR23417">
    <property type="entry name" value="3-DEOXY-D-MANNO-OCTULOSONIC-ACID TRANSFERASE/TRNA GUANINE-N 7 - -METHYLTRANSFERASE"/>
    <property type="match status" value="1"/>
</dbReference>
<dbReference type="PANTHER" id="PTHR23417:SF14">
    <property type="entry name" value="PENTACOTRIPEPTIDE-REPEAT REGION OF PRORP DOMAIN-CONTAINING PROTEIN"/>
    <property type="match status" value="1"/>
</dbReference>
<dbReference type="Pfam" id="PF02390">
    <property type="entry name" value="Methyltransf_4"/>
    <property type="match status" value="1"/>
</dbReference>
<dbReference type="SUPFAM" id="SSF53335">
    <property type="entry name" value="S-adenosyl-L-methionine-dependent methyltransferases"/>
    <property type="match status" value="1"/>
</dbReference>
<dbReference type="PROSITE" id="PS51625">
    <property type="entry name" value="SAM_MT_TRMB"/>
    <property type="match status" value="1"/>
</dbReference>
<comment type="function">
    <text evidence="2">Catalyzes the formation of N(7)-methylguanine at position 46 (m7G46) in tRNA.</text>
</comment>
<comment type="catalytic activity">
    <reaction evidence="2">
        <text>guanosine(46) in tRNA + S-adenosyl-L-methionine = N(7)-methylguanosine(46) in tRNA + S-adenosyl-L-homocysteine</text>
        <dbReference type="Rhea" id="RHEA:42708"/>
        <dbReference type="Rhea" id="RHEA-COMP:10188"/>
        <dbReference type="Rhea" id="RHEA-COMP:10189"/>
        <dbReference type="ChEBI" id="CHEBI:57856"/>
        <dbReference type="ChEBI" id="CHEBI:59789"/>
        <dbReference type="ChEBI" id="CHEBI:74269"/>
        <dbReference type="ChEBI" id="CHEBI:74480"/>
        <dbReference type="EC" id="2.1.1.33"/>
    </reaction>
</comment>
<comment type="pathway">
    <text evidence="2">tRNA modification; N(7)-methylguanine-tRNA biosynthesis.</text>
</comment>
<comment type="similarity">
    <text evidence="2">Belongs to the class I-like SAM-binding methyltransferase superfamily. TrmB family.</text>
</comment>
<gene>
    <name evidence="2" type="primary">trmB</name>
    <name type="ordered locus">XCV3418</name>
</gene>
<keyword id="KW-0489">Methyltransferase</keyword>
<keyword id="KW-0949">S-adenosyl-L-methionine</keyword>
<keyword id="KW-0808">Transferase</keyword>
<keyword id="KW-0819">tRNA processing</keyword>
<reference key="1">
    <citation type="journal article" date="2005" name="J. Bacteriol.">
        <title>Insights into genome plasticity and pathogenicity of the plant pathogenic Bacterium Xanthomonas campestris pv. vesicatoria revealed by the complete genome sequence.</title>
        <authorList>
            <person name="Thieme F."/>
            <person name="Koebnik R."/>
            <person name="Bekel T."/>
            <person name="Berger C."/>
            <person name="Boch J."/>
            <person name="Buettner D."/>
            <person name="Caldana C."/>
            <person name="Gaigalat L."/>
            <person name="Goesmann A."/>
            <person name="Kay S."/>
            <person name="Kirchner O."/>
            <person name="Lanz C."/>
            <person name="Linke B."/>
            <person name="McHardy A.C."/>
            <person name="Meyer F."/>
            <person name="Mittenhuber G."/>
            <person name="Nies D.H."/>
            <person name="Niesbach-Kloesgen U."/>
            <person name="Patschkowski T."/>
            <person name="Rueckert C."/>
            <person name="Rupp O."/>
            <person name="Schneiker S."/>
            <person name="Schuster S.C."/>
            <person name="Vorhoelter F.J."/>
            <person name="Weber E."/>
            <person name="Puehler A."/>
            <person name="Bonas U."/>
            <person name="Bartels D."/>
            <person name="Kaiser O."/>
        </authorList>
    </citation>
    <scope>NUCLEOTIDE SEQUENCE [LARGE SCALE GENOMIC DNA]</scope>
    <source>
        <strain>85-10</strain>
    </source>
</reference>
<name>TRMB_XANE5</name>
<sequence>MTDPFTSDGAKMPPKPFTVEEGRRQVRSFVLRQGRFTPAQQRAFDDLWPRFGLDYTGAPRDLAATFGRDAHKVLEIGFGNGAALRFAAQQDPSRDYIGIEVHAPGVGRLLNALDEDGSTHVRLYHHDAVEVLEHEIADGALDEVRIYFPDPWHKKRHNKRRLIQPAFAQLLVRKLREGGRLHAATDWADYAEQMWDVLDATPGLVNRAGPRGHVERPAWRPQTHFETRGQKLGHGVWDLLYDRDSGIGNRKGNCPRRPDNPQRPQFSLCQFPIPDSPFPAPNGHRADADQRYEARPRAGRFHDGDVPVRAHSRRRGGIDRAGGLGRHRTGGAGRIVRRFLR</sequence>
<feature type="chain" id="PRO_0000229210" description="tRNA (guanine-N(7)-)-methyltransferase">
    <location>
        <begin position="1"/>
        <end position="341"/>
    </location>
</feature>
<feature type="region of interest" description="Interaction with RNA" evidence="2">
    <location>
        <begin position="156"/>
        <end position="161"/>
    </location>
</feature>
<feature type="active site" evidence="1">
    <location>
        <position position="150"/>
    </location>
</feature>
<feature type="binding site" evidence="2">
    <location>
        <position position="75"/>
    </location>
    <ligand>
        <name>S-adenosyl-L-methionine</name>
        <dbReference type="ChEBI" id="CHEBI:59789"/>
    </ligand>
</feature>
<feature type="binding site" evidence="2">
    <location>
        <position position="100"/>
    </location>
    <ligand>
        <name>S-adenosyl-L-methionine</name>
        <dbReference type="ChEBI" id="CHEBI:59789"/>
    </ligand>
</feature>
<feature type="binding site" evidence="2">
    <location>
        <position position="127"/>
    </location>
    <ligand>
        <name>S-adenosyl-L-methionine</name>
        <dbReference type="ChEBI" id="CHEBI:59789"/>
    </ligand>
</feature>
<feature type="binding site" evidence="2">
    <location>
        <position position="150"/>
    </location>
    <ligand>
        <name>S-adenosyl-L-methionine</name>
        <dbReference type="ChEBI" id="CHEBI:59789"/>
    </ligand>
</feature>
<feature type="binding site" evidence="2">
    <location>
        <position position="154"/>
    </location>
    <ligand>
        <name>substrate</name>
    </ligand>
</feature>
<feature type="binding site" evidence="2">
    <location>
        <position position="186"/>
    </location>
    <ligand>
        <name>substrate</name>
    </ligand>
</feature>
<proteinExistence type="inferred from homology"/>
<organism>
    <name type="scientific">Xanthomonas euvesicatoria pv. vesicatoria (strain 85-10)</name>
    <name type="common">Xanthomonas campestris pv. vesicatoria</name>
    <dbReference type="NCBI Taxonomy" id="316273"/>
    <lineage>
        <taxon>Bacteria</taxon>
        <taxon>Pseudomonadati</taxon>
        <taxon>Pseudomonadota</taxon>
        <taxon>Gammaproteobacteria</taxon>
        <taxon>Lysobacterales</taxon>
        <taxon>Lysobacteraceae</taxon>
        <taxon>Xanthomonas</taxon>
    </lineage>
</organism>